<comment type="subunit">
    <text evidence="1">Part of the 50S ribosomal subunit. Contacts protein L32.</text>
</comment>
<comment type="similarity">
    <text evidence="1">Belongs to the bacterial ribosomal protein bL17 family.</text>
</comment>
<gene>
    <name evidence="1" type="primary">rplQ</name>
    <name type="ordered locus">Rfer_4216</name>
</gene>
<feature type="chain" id="PRO_0000267927" description="Large ribosomal subunit protein bL17">
    <location>
        <begin position="1"/>
        <end position="132"/>
    </location>
</feature>
<dbReference type="EMBL" id="CP000267">
    <property type="protein sequence ID" value="ABD71903.1"/>
    <property type="molecule type" value="Genomic_DNA"/>
</dbReference>
<dbReference type="RefSeq" id="WP_011466461.1">
    <property type="nucleotide sequence ID" value="NC_007908.1"/>
</dbReference>
<dbReference type="SMR" id="Q21QQ0"/>
<dbReference type="STRING" id="338969.Rfer_4216"/>
<dbReference type="KEGG" id="rfr:Rfer_4216"/>
<dbReference type="eggNOG" id="COG0203">
    <property type="taxonomic scope" value="Bacteria"/>
</dbReference>
<dbReference type="HOGENOM" id="CLU_074407_2_0_4"/>
<dbReference type="OrthoDB" id="9809073at2"/>
<dbReference type="Proteomes" id="UP000008332">
    <property type="component" value="Chromosome"/>
</dbReference>
<dbReference type="GO" id="GO:0022625">
    <property type="term" value="C:cytosolic large ribosomal subunit"/>
    <property type="evidence" value="ECO:0007669"/>
    <property type="project" value="TreeGrafter"/>
</dbReference>
<dbReference type="GO" id="GO:0003735">
    <property type="term" value="F:structural constituent of ribosome"/>
    <property type="evidence" value="ECO:0007669"/>
    <property type="project" value="InterPro"/>
</dbReference>
<dbReference type="GO" id="GO:0006412">
    <property type="term" value="P:translation"/>
    <property type="evidence" value="ECO:0007669"/>
    <property type="project" value="UniProtKB-UniRule"/>
</dbReference>
<dbReference type="FunFam" id="3.90.1030.10:FF:000001">
    <property type="entry name" value="50S ribosomal protein L17"/>
    <property type="match status" value="1"/>
</dbReference>
<dbReference type="Gene3D" id="3.90.1030.10">
    <property type="entry name" value="Ribosomal protein L17"/>
    <property type="match status" value="1"/>
</dbReference>
<dbReference type="HAMAP" id="MF_01368">
    <property type="entry name" value="Ribosomal_bL17"/>
    <property type="match status" value="1"/>
</dbReference>
<dbReference type="InterPro" id="IPR000456">
    <property type="entry name" value="Ribosomal_bL17"/>
</dbReference>
<dbReference type="InterPro" id="IPR047859">
    <property type="entry name" value="Ribosomal_bL17_CS"/>
</dbReference>
<dbReference type="InterPro" id="IPR036373">
    <property type="entry name" value="Ribosomal_bL17_sf"/>
</dbReference>
<dbReference type="NCBIfam" id="TIGR00059">
    <property type="entry name" value="L17"/>
    <property type="match status" value="1"/>
</dbReference>
<dbReference type="PANTHER" id="PTHR14413:SF16">
    <property type="entry name" value="LARGE RIBOSOMAL SUBUNIT PROTEIN BL17M"/>
    <property type="match status" value="1"/>
</dbReference>
<dbReference type="PANTHER" id="PTHR14413">
    <property type="entry name" value="RIBOSOMAL PROTEIN L17"/>
    <property type="match status" value="1"/>
</dbReference>
<dbReference type="Pfam" id="PF01196">
    <property type="entry name" value="Ribosomal_L17"/>
    <property type="match status" value="1"/>
</dbReference>
<dbReference type="SUPFAM" id="SSF64263">
    <property type="entry name" value="Prokaryotic ribosomal protein L17"/>
    <property type="match status" value="1"/>
</dbReference>
<dbReference type="PROSITE" id="PS01167">
    <property type="entry name" value="RIBOSOMAL_L17"/>
    <property type="match status" value="1"/>
</dbReference>
<name>RL17_ALBFT</name>
<evidence type="ECO:0000255" key="1">
    <source>
        <dbReference type="HAMAP-Rule" id="MF_01368"/>
    </source>
</evidence>
<evidence type="ECO:0000305" key="2"/>
<keyword id="KW-1185">Reference proteome</keyword>
<keyword id="KW-0687">Ribonucleoprotein</keyword>
<keyword id="KW-0689">Ribosomal protein</keyword>
<sequence>MRHGHGLRKLNRTSEHRLAMLRNMMNSLIEHEVIKTTLPKAKELRRVVEPMITLAKEATVANRRLAFDRLRDRDSVVKLFNDLGPRFKARPGGYTRILKMGFRVGDNAPMALVELVDRAELAEAPTDEKSED</sequence>
<organism>
    <name type="scientific">Albidiferax ferrireducens (strain ATCC BAA-621 / DSM 15236 / T118)</name>
    <name type="common">Rhodoferax ferrireducens</name>
    <dbReference type="NCBI Taxonomy" id="338969"/>
    <lineage>
        <taxon>Bacteria</taxon>
        <taxon>Pseudomonadati</taxon>
        <taxon>Pseudomonadota</taxon>
        <taxon>Betaproteobacteria</taxon>
        <taxon>Burkholderiales</taxon>
        <taxon>Comamonadaceae</taxon>
        <taxon>Rhodoferax</taxon>
    </lineage>
</organism>
<proteinExistence type="inferred from homology"/>
<accession>Q21QQ0</accession>
<reference key="1">
    <citation type="submission" date="2006-02" db="EMBL/GenBank/DDBJ databases">
        <title>Complete sequence of chromosome of Rhodoferax ferrireducens DSM 15236.</title>
        <authorList>
            <person name="Copeland A."/>
            <person name="Lucas S."/>
            <person name="Lapidus A."/>
            <person name="Barry K."/>
            <person name="Detter J.C."/>
            <person name="Glavina del Rio T."/>
            <person name="Hammon N."/>
            <person name="Israni S."/>
            <person name="Pitluck S."/>
            <person name="Brettin T."/>
            <person name="Bruce D."/>
            <person name="Han C."/>
            <person name="Tapia R."/>
            <person name="Gilna P."/>
            <person name="Kiss H."/>
            <person name="Schmutz J."/>
            <person name="Larimer F."/>
            <person name="Land M."/>
            <person name="Kyrpides N."/>
            <person name="Ivanova N."/>
            <person name="Richardson P."/>
        </authorList>
    </citation>
    <scope>NUCLEOTIDE SEQUENCE [LARGE SCALE GENOMIC DNA]</scope>
    <source>
        <strain>ATCC BAA-621 / DSM 15236 / T118</strain>
    </source>
</reference>
<protein>
    <recommendedName>
        <fullName evidence="1">Large ribosomal subunit protein bL17</fullName>
    </recommendedName>
    <alternativeName>
        <fullName evidence="2">50S ribosomal protein L17</fullName>
    </alternativeName>
</protein>